<gene>
    <name type="ORF">C1/C2</name>
</gene>
<protein>
    <recommendedName>
        <fullName>Replication-associated protein</fullName>
        <shortName>Rep</shortName>
        <ecNumber>2.7.7.-</ecNumber>
        <ecNumber>3.1.21.-</ecNumber>
    </recommendedName>
</protein>
<reference key="1">
    <citation type="journal article" date="1988" name="Nucleic Acids Res.">
        <title>Infectivity and complete nucleotide sequence of the genome of a South African isolate of maize streak virus.</title>
        <authorList>
            <person name="Lazarowitz S.G."/>
        </authorList>
    </citation>
    <scope>NUCLEOTIDE SEQUENCE [GENOMIC DNA]</scope>
</reference>
<comment type="function">
    <text evidence="1">Essential for the replication of viral ssDNA. The closed circular ssDNA genome is first converted to a superhelical dsDNA. Rep binds a specific region at the genome origin of replication. It introduces an endonucleolytic nick within the conserved sequence 5'-TAATATTAC-3' in the intergenic region of the genome present in all geminiviruses, thereby initiating the rolling circle replication (RCR). Following cleavage, binds covalently to the 5'-phosphate of DNA as a tyrosyl ester. The cleavage gives rise to a free 3'-OH that serves as a primer for the cellular DNA polymerase. The polymerase synthesizes the (+) strand DNA by rolling circle mechanism. After one round of replication, a Rep-catalyzed nucleotidyl transfer reaction releases a circular single-stranded virus genome, thereby terminating the replication. Displays origin-specific DNA cleavage, nucleotidyl transferase, ATPase and helicase activities. Acts as an inhibitor of C-sense gene transcription (By similarity).</text>
</comment>
<comment type="cofactor">
    <cofactor evidence="3">
        <name>Mg(2+)</name>
        <dbReference type="ChEBI" id="CHEBI:18420"/>
    </cofactor>
    <cofactor evidence="3">
        <name>Mn(2+)</name>
        <dbReference type="ChEBI" id="CHEBI:29035"/>
    </cofactor>
    <text evidence="3">Divalent metal cations, possibly Mg(2+) or Mn(2+).</text>
</comment>
<comment type="subunit">
    <text>Homooligomer. Rep binds to repeated DNA motifs (iterons). Forms the O-complex, which is a Rep-DNA complex involved in the initiation of RCR. Part of the C- and V-complexes which are RepA-Rep-DNA complexes involved in the c-sense and v-sense transcription.</text>
</comment>
<comment type="subcellular location">
    <subcellularLocation>
        <location evidence="1">Host nucleus</location>
    </subcellularLocation>
</comment>
<comment type="alternative products">
    <event type="alternative splicing"/>
    <isoform>
        <id>P14989-1</id>
        <name>Rep</name>
        <sequence type="displayed"/>
    </isoform>
    <isoform>
        <id>P14990-1</id>
        <name>RepA</name>
        <sequence type="external"/>
    </isoform>
</comment>
<comment type="domain">
    <text>There are 3 rolling circle replication (RCR) motifs. RCR-2 is probably involved in metal coordination. RCR-3 is required for phosphodiester bond cleavage for initiation of RCR.</text>
</comment>
<comment type="similarity">
    <text evidence="4">Belongs to the geminiviridae Rep protein family.</text>
</comment>
<comment type="sequence caution" evidence="4">
    <conflict type="erroneous gene model prediction">
        <sequence resource="EMBL-CDS" id="CAA68568"/>
    </conflict>
</comment>
<comment type="sequence caution" evidence="4">
    <conflict type="erroneous gene model prediction">
        <sequence resource="EMBL-CDS" id="CAA68569"/>
    </conflict>
</comment>
<organism>
    <name type="scientific">Maize streak virus genotype A (isolate South Africa)</name>
    <name type="common">MSV</name>
    <dbReference type="NCBI Taxonomy" id="10824"/>
    <lineage>
        <taxon>Viruses</taxon>
        <taxon>Monodnaviria</taxon>
        <taxon>Shotokuvirae</taxon>
        <taxon>Cressdnaviricota</taxon>
        <taxon>Repensiviricetes</taxon>
        <taxon>Geplafuvirales</taxon>
        <taxon>Geminiviridae</taxon>
        <taxon>Mastrevirus</taxon>
        <taxon>Maize streak virus</taxon>
    </lineage>
</organism>
<organismHost>
    <name type="scientific">Avena sativa</name>
    <name type="common">Oat</name>
    <dbReference type="NCBI Taxonomy" id="4498"/>
</organismHost>
<organismHost>
    <name type="scientific">Axonopus compressus</name>
    <dbReference type="NCBI Taxonomy" id="217170"/>
</organismHost>
<organismHost>
    <name type="scientific">Cenchrus americanus</name>
    <name type="common">Pearl millet</name>
    <name type="synonym">Pennisetum glaucum</name>
    <dbReference type="NCBI Taxonomy" id="4543"/>
</organismHost>
<organismHost>
    <name type="scientific">Cenchrus polystachios</name>
    <dbReference type="NCBI Taxonomy" id="281129"/>
</organismHost>
<organismHost>
    <name type="scientific">Coix lacryma-jobi</name>
    <name type="common">Job's tears</name>
    <dbReference type="NCBI Taxonomy" id="4505"/>
</organismHost>
<organismHost>
    <name type="scientific">Dactyloctenium aegyptium</name>
    <dbReference type="NCBI Taxonomy" id="270102"/>
</organismHost>
<organismHost>
    <name type="scientific">Digitaria</name>
    <dbReference type="NCBI Taxonomy" id="66017"/>
</organismHost>
<organismHost>
    <name type="scientific">Echinochloa colona</name>
    <dbReference type="NCBI Taxonomy" id="90396"/>
</organismHost>
<organismHost>
    <name type="scientific">Eleusine coracana</name>
    <name type="common">Indian finger millet</name>
    <name type="synonym">Ragi</name>
    <dbReference type="NCBI Taxonomy" id="4511"/>
</organismHost>
<organismHost>
    <name type="scientific">Eleusine indica</name>
    <name type="common">Goosegrass</name>
    <name type="synonym">Cynosurus indicus</name>
    <dbReference type="NCBI Taxonomy" id="29674"/>
</organismHost>
<organismHost>
    <name type="scientific">Hordeum vulgare</name>
    <name type="common">Barley</name>
    <dbReference type="NCBI Taxonomy" id="4513"/>
</organismHost>
<organismHost>
    <name type="scientific">Megathyrsus maximus</name>
    <dbReference type="NCBI Taxonomy" id="59788"/>
</organismHost>
<organismHost>
    <name type="scientific">Melinis repens</name>
    <name type="common">Red Natal grass</name>
    <name type="synonym">Rhynchelytrum repens</name>
    <dbReference type="NCBI Taxonomy" id="29709"/>
</organismHost>
<organismHost>
    <name type="scientific">Oryza glaberrima</name>
    <name type="common">African rice</name>
    <dbReference type="NCBI Taxonomy" id="4538"/>
</organismHost>
<organismHost>
    <name type="scientific">Oryza sativa</name>
    <name type="common">Rice</name>
    <dbReference type="NCBI Taxonomy" id="4530"/>
</organismHost>
<organismHost>
    <name type="scientific">Paspalum conjugatum</name>
    <name type="common">Hilo grass</name>
    <dbReference type="NCBI Taxonomy" id="158143"/>
</organismHost>
<organismHost>
    <name type="scientific">Paspalum notatum</name>
    <name type="common">Bahia grass</name>
    <dbReference type="NCBI Taxonomy" id="147272"/>
</organismHost>
<organismHost>
    <name type="scientific">Paspalum scrobiculatum</name>
    <dbReference type="NCBI Taxonomy" id="173849"/>
</organismHost>
<organismHost>
    <name type="scientific">Rottboellia cochinchinensis</name>
    <dbReference type="NCBI Taxonomy" id="300125"/>
</organismHost>
<organismHost>
    <name type="scientific">Saccharum officinarum</name>
    <name type="common">Sugarcane</name>
    <dbReference type="NCBI Taxonomy" id="4547"/>
</organismHost>
<organismHost>
    <name type="scientific">Setaria barbata</name>
    <dbReference type="NCBI Taxonomy" id="192628"/>
</organismHost>
<organismHost>
    <name type="scientific">Triticum aestivum</name>
    <name type="common">Wheat</name>
    <dbReference type="NCBI Taxonomy" id="4565"/>
</organismHost>
<organismHost>
    <name type="scientific">Urochloa deflexa</name>
    <dbReference type="NCBI Taxonomy" id="240436"/>
</organismHost>
<organismHost>
    <name type="scientific">Zea mays</name>
    <name type="common">Maize</name>
    <dbReference type="NCBI Taxonomy" id="4577"/>
</organismHost>
<name>REP_MSVS</name>
<sequence>MASSSSNRQFSHRNANTFLTYPKCPENPEIACQMIWELVVRWIPKYILCAREAHKDGSLHLHALLQTEKPVRISDSRFFDINGFHPNIQSAKSVNRVRDYILKEPLAVFERGTFIPRKSPFLGKSDSEVKEKKPSKDEIMRDIISHATSKAEYLSMIQKELPFDWSTKLQYFEYSANKLFPEIQEEFTNPHPPSSPDLLCNESINDWLQPNIFQSSDERSRKQSLYIVGPTRTGKSTWARSLGVHNYWQNNVDWSSYNEDAIYNIVDDIPFKFCPCWKQLVGCQRDFIVNPKYGKKKKVQKKSKPTIILANSDEDWMKEMTPGQLEYFEANCIIYIMSPGEKWYSPPVLPPTEEV</sequence>
<keyword id="KW-0025">Alternative splicing</keyword>
<keyword id="KW-0067">ATP-binding</keyword>
<keyword id="KW-0190">Covalent protein-DNA linkage</keyword>
<keyword id="KW-0235">DNA replication</keyword>
<keyword id="KW-0238">DNA-binding</keyword>
<keyword id="KW-0255">Endonuclease</keyword>
<keyword id="KW-0347">Helicase</keyword>
<keyword id="KW-1048">Host nucleus</keyword>
<keyword id="KW-0378">Hydrolase</keyword>
<keyword id="KW-0479">Metal-binding</keyword>
<keyword id="KW-0511">Multifunctional enzyme</keyword>
<keyword id="KW-0540">Nuclease</keyword>
<keyword id="KW-0547">Nucleotide-binding</keyword>
<keyword id="KW-0548">Nucleotidyltransferase</keyword>
<keyword id="KW-1185">Reference proteome</keyword>
<keyword id="KW-0678">Repressor</keyword>
<keyword id="KW-0808">Transferase</keyword>
<dbReference type="EC" id="2.7.7.-"/>
<dbReference type="EC" id="3.1.21.-"/>
<dbReference type="EMBL" id="Y00514">
    <property type="protein sequence ID" value="CAA68568.1"/>
    <property type="status" value="ALT_SEQ"/>
    <property type="molecule type" value="Genomic_DNA"/>
</dbReference>
<dbReference type="EMBL" id="Y00514">
    <property type="protein sequence ID" value="CAA68569.1"/>
    <property type="status" value="ALT_SEQ"/>
    <property type="molecule type" value="Genomic_DNA"/>
</dbReference>
<dbReference type="PIR" id="S04807">
    <property type="entry name" value="S04807"/>
</dbReference>
<dbReference type="SMR" id="P14989"/>
<dbReference type="Proteomes" id="UP000006541">
    <property type="component" value="Segment"/>
</dbReference>
<dbReference type="GO" id="GO:0042025">
    <property type="term" value="C:host cell nucleus"/>
    <property type="evidence" value="ECO:0007669"/>
    <property type="project" value="UniProtKB-SubCell"/>
</dbReference>
<dbReference type="GO" id="GO:0005524">
    <property type="term" value="F:ATP binding"/>
    <property type="evidence" value="ECO:0007669"/>
    <property type="project" value="UniProtKB-KW"/>
</dbReference>
<dbReference type="GO" id="GO:0003677">
    <property type="term" value="F:DNA binding"/>
    <property type="evidence" value="ECO:0007669"/>
    <property type="project" value="UniProtKB-KW"/>
</dbReference>
<dbReference type="GO" id="GO:0016888">
    <property type="term" value="F:endodeoxyribonuclease activity, producing 5'-phosphomonoesters"/>
    <property type="evidence" value="ECO:0007669"/>
    <property type="project" value="InterPro"/>
</dbReference>
<dbReference type="GO" id="GO:0004386">
    <property type="term" value="F:helicase activity"/>
    <property type="evidence" value="ECO:0007669"/>
    <property type="project" value="UniProtKB-KW"/>
</dbReference>
<dbReference type="GO" id="GO:0046872">
    <property type="term" value="F:metal ion binding"/>
    <property type="evidence" value="ECO:0007669"/>
    <property type="project" value="UniProtKB-KW"/>
</dbReference>
<dbReference type="GO" id="GO:0016779">
    <property type="term" value="F:nucleotidyltransferase activity"/>
    <property type="evidence" value="ECO:0007669"/>
    <property type="project" value="UniProtKB-KW"/>
</dbReference>
<dbReference type="GO" id="GO:0005198">
    <property type="term" value="F:structural molecule activity"/>
    <property type="evidence" value="ECO:0007669"/>
    <property type="project" value="InterPro"/>
</dbReference>
<dbReference type="GO" id="GO:0006260">
    <property type="term" value="P:DNA replication"/>
    <property type="evidence" value="ECO:0007669"/>
    <property type="project" value="UniProtKB-KW"/>
</dbReference>
<dbReference type="Gene3D" id="3.40.1310.20">
    <property type="match status" value="1"/>
</dbReference>
<dbReference type="InterPro" id="IPR049912">
    <property type="entry name" value="CRESS_DNA_REP"/>
</dbReference>
<dbReference type="InterPro" id="IPR001146">
    <property type="entry name" value="Gemini_AL1_MSV"/>
</dbReference>
<dbReference type="InterPro" id="IPR001191">
    <property type="entry name" value="Gemini_AL1_REP"/>
</dbReference>
<dbReference type="InterPro" id="IPR022692">
    <property type="entry name" value="Gemini_AL1_REP_central"/>
</dbReference>
<dbReference type="InterPro" id="IPR027417">
    <property type="entry name" value="P-loop_NTPase"/>
</dbReference>
<dbReference type="Pfam" id="PF00799">
    <property type="entry name" value="Gemini_AL1"/>
    <property type="match status" value="1"/>
</dbReference>
<dbReference type="Pfam" id="PF08283">
    <property type="entry name" value="Gemini_AL1_M"/>
    <property type="match status" value="1"/>
</dbReference>
<dbReference type="PRINTS" id="PR00227">
    <property type="entry name" value="GEMCOATAL1"/>
</dbReference>
<dbReference type="PRINTS" id="PR00229">
    <property type="entry name" value="GEMCOATMSVL1"/>
</dbReference>
<dbReference type="SUPFAM" id="SSF55464">
    <property type="entry name" value="Origin of replication-binding domain, RBD-like"/>
    <property type="match status" value="1"/>
</dbReference>
<dbReference type="SUPFAM" id="SSF52540">
    <property type="entry name" value="P-loop containing nucleoside triphosphate hydrolases"/>
    <property type="match status" value="1"/>
</dbReference>
<dbReference type="PROSITE" id="PS52020">
    <property type="entry name" value="CRESS_DNA_REP"/>
    <property type="match status" value="1"/>
</dbReference>
<feature type="chain" id="PRO_0000222292" description="Replication-associated protein">
    <location>
        <begin position="1"/>
        <end position="355"/>
    </location>
</feature>
<feature type="domain" description="CRESS-DNA virus Rep endonuclease" evidence="3">
    <location>
        <begin position="11"/>
        <end position="114"/>
    </location>
</feature>
<feature type="region of interest" description="Oligomerization" evidence="1">
    <location>
        <begin position="175"/>
        <end position="187"/>
    </location>
</feature>
<feature type="region of interest" description="Transactivation" evidence="1">
    <location>
        <begin position="252"/>
        <end position="270"/>
    </location>
</feature>
<feature type="short sequence motif" description="RCR-1" evidence="3">
    <location>
        <begin position="18"/>
        <end position="21"/>
    </location>
</feature>
<feature type="short sequence motif" description="RCR-2" evidence="3">
    <location>
        <begin position="60"/>
        <end position="62"/>
    </location>
</feature>
<feature type="short sequence motif" description="RCR-3" evidence="3">
    <location>
        <begin position="100"/>
        <end position="103"/>
    </location>
</feature>
<feature type="short sequence motif" description="Nuclear localization signal" evidence="2">
    <location>
        <begin position="292"/>
        <end position="303"/>
    </location>
</feature>
<feature type="active site" description="For DNA cleavage activity" evidence="3">
    <location>
        <position position="100"/>
    </location>
</feature>
<feature type="binding site" evidence="3">
    <location>
        <position position="52"/>
    </location>
    <ligand>
        <name>a divalent metal cation</name>
        <dbReference type="ChEBI" id="CHEBI:60240"/>
    </ligand>
</feature>
<feature type="binding site" evidence="3">
    <location>
        <position position="60"/>
    </location>
    <ligand>
        <name>a divalent metal cation</name>
        <dbReference type="ChEBI" id="CHEBI:60240"/>
    </ligand>
</feature>
<feature type="binding site" evidence="3">
    <location>
        <position position="62"/>
    </location>
    <ligand>
        <name>a divalent metal cation</name>
        <dbReference type="ChEBI" id="CHEBI:60240"/>
    </ligand>
</feature>
<feature type="binding site" evidence="3">
    <location>
        <position position="104"/>
    </location>
    <ligand>
        <name>a divalent metal cation</name>
        <dbReference type="ChEBI" id="CHEBI:60240"/>
    </ligand>
</feature>
<feature type="binding site" evidence="2">
    <location>
        <begin position="229"/>
        <end position="236"/>
    </location>
    <ligand>
        <name>ATP</name>
        <dbReference type="ChEBI" id="CHEBI:30616"/>
    </ligand>
</feature>
<evidence type="ECO:0000250" key="1"/>
<evidence type="ECO:0000255" key="2"/>
<evidence type="ECO:0000255" key="3">
    <source>
        <dbReference type="PROSITE-ProRule" id="PRU01364"/>
    </source>
</evidence>
<evidence type="ECO:0000305" key="4"/>
<accession>P14989</accession>
<proteinExistence type="inferred from homology"/>